<protein>
    <recommendedName>
        <fullName evidence="1">tRNA-specific 2-thiouridylase MnmA</fullName>
        <ecNumber evidence="1">2.8.1.13</ecNumber>
    </recommendedName>
</protein>
<reference key="1">
    <citation type="journal article" date="2006" name="Appl. Environ. Microbiol.">
        <title>Genome sequence of the chemolithoautotrophic nitrite-oxidizing bacterium Nitrobacter winogradskyi Nb-255.</title>
        <authorList>
            <person name="Starkenburg S.R."/>
            <person name="Chain P.S.G."/>
            <person name="Sayavedra-Soto L.A."/>
            <person name="Hauser L."/>
            <person name="Land M.L."/>
            <person name="Larimer F.W."/>
            <person name="Malfatti S.A."/>
            <person name="Klotz M.G."/>
            <person name="Bottomley P.J."/>
            <person name="Arp D.J."/>
            <person name="Hickey W.J."/>
        </authorList>
    </citation>
    <scope>NUCLEOTIDE SEQUENCE [LARGE SCALE GENOMIC DNA]</scope>
    <source>
        <strain>ATCC 25391 / DSM 10237 / CIP 104748 / NCIMB 11846 / Nb-255</strain>
    </source>
</reference>
<organism>
    <name type="scientific">Nitrobacter winogradskyi (strain ATCC 25391 / DSM 10237 / CIP 104748 / NCIMB 11846 / Nb-255)</name>
    <dbReference type="NCBI Taxonomy" id="323098"/>
    <lineage>
        <taxon>Bacteria</taxon>
        <taxon>Pseudomonadati</taxon>
        <taxon>Pseudomonadota</taxon>
        <taxon>Alphaproteobacteria</taxon>
        <taxon>Hyphomicrobiales</taxon>
        <taxon>Nitrobacteraceae</taxon>
        <taxon>Nitrobacter</taxon>
    </lineage>
</organism>
<gene>
    <name evidence="1" type="primary">mnmA</name>
    <name type="ordered locus">Nwi_0603</name>
</gene>
<evidence type="ECO:0000255" key="1">
    <source>
        <dbReference type="HAMAP-Rule" id="MF_00144"/>
    </source>
</evidence>
<comment type="function">
    <text evidence="1">Catalyzes the 2-thiolation of uridine at the wobble position (U34) of tRNA, leading to the formation of s(2)U34.</text>
</comment>
<comment type="catalytic activity">
    <reaction evidence="1">
        <text>S-sulfanyl-L-cysteinyl-[protein] + uridine(34) in tRNA + AH2 + ATP = 2-thiouridine(34) in tRNA + L-cysteinyl-[protein] + A + AMP + diphosphate + H(+)</text>
        <dbReference type="Rhea" id="RHEA:47032"/>
        <dbReference type="Rhea" id="RHEA-COMP:10131"/>
        <dbReference type="Rhea" id="RHEA-COMP:11726"/>
        <dbReference type="Rhea" id="RHEA-COMP:11727"/>
        <dbReference type="Rhea" id="RHEA-COMP:11728"/>
        <dbReference type="ChEBI" id="CHEBI:13193"/>
        <dbReference type="ChEBI" id="CHEBI:15378"/>
        <dbReference type="ChEBI" id="CHEBI:17499"/>
        <dbReference type="ChEBI" id="CHEBI:29950"/>
        <dbReference type="ChEBI" id="CHEBI:30616"/>
        <dbReference type="ChEBI" id="CHEBI:33019"/>
        <dbReference type="ChEBI" id="CHEBI:61963"/>
        <dbReference type="ChEBI" id="CHEBI:65315"/>
        <dbReference type="ChEBI" id="CHEBI:87170"/>
        <dbReference type="ChEBI" id="CHEBI:456215"/>
        <dbReference type="EC" id="2.8.1.13"/>
    </reaction>
</comment>
<comment type="subcellular location">
    <subcellularLocation>
        <location evidence="1">Cytoplasm</location>
    </subcellularLocation>
</comment>
<comment type="similarity">
    <text evidence="1">Belongs to the MnmA/TRMU family.</text>
</comment>
<sequence>MLNSLDLEGRPQDTRVVVAMSGGVDSSVTAALLKSEGYDVVGITLQLYDHGAATHRKGACCAGQDIHDARNVAARLGVPHYVLDYESRFRETVIENFADSYASGETPVPCIECNRQVKFRDLLATARELGAAALATGHYVSSRRLADGSRALLCAADTDRDQSYFLFATTREQLDFLRFPLGDMTKQQTRELARRFGLSVADKHDSQDICFVPTGRYTDIISRLKPNAMVSGDIVDLDGHVIGHHEGIVHFTVGQRRGLGIASGAPLYVLSLDAANRRVVVGPREALKMHRIVLRDVNWIGDGALDRAIGAGLELFVRVRSTRRPQPAWLRVVDGRYEVELVAGEEGVSPGQACVFYDGAEGQSRVLGGGFIARAMAQRANEAAAQSGTLAQSFAAELRG</sequence>
<dbReference type="EC" id="2.8.1.13" evidence="1"/>
<dbReference type="EMBL" id="CP000115">
    <property type="protein sequence ID" value="ABA03870.1"/>
    <property type="molecule type" value="Genomic_DNA"/>
</dbReference>
<dbReference type="RefSeq" id="WP_011313930.1">
    <property type="nucleotide sequence ID" value="NC_007406.1"/>
</dbReference>
<dbReference type="SMR" id="Q3SV21"/>
<dbReference type="STRING" id="323098.Nwi_0603"/>
<dbReference type="KEGG" id="nwi:Nwi_0603"/>
<dbReference type="eggNOG" id="COG0482">
    <property type="taxonomic scope" value="Bacteria"/>
</dbReference>
<dbReference type="HOGENOM" id="CLU_035188_0_1_5"/>
<dbReference type="OrthoDB" id="9800696at2"/>
<dbReference type="Proteomes" id="UP000002531">
    <property type="component" value="Chromosome"/>
</dbReference>
<dbReference type="GO" id="GO:0005737">
    <property type="term" value="C:cytoplasm"/>
    <property type="evidence" value="ECO:0007669"/>
    <property type="project" value="UniProtKB-SubCell"/>
</dbReference>
<dbReference type="GO" id="GO:0005524">
    <property type="term" value="F:ATP binding"/>
    <property type="evidence" value="ECO:0007669"/>
    <property type="project" value="UniProtKB-KW"/>
</dbReference>
<dbReference type="GO" id="GO:0000049">
    <property type="term" value="F:tRNA binding"/>
    <property type="evidence" value="ECO:0007669"/>
    <property type="project" value="UniProtKB-KW"/>
</dbReference>
<dbReference type="GO" id="GO:0103016">
    <property type="term" value="F:tRNA-uridine 2-sulfurtransferase activity"/>
    <property type="evidence" value="ECO:0007669"/>
    <property type="project" value="UniProtKB-EC"/>
</dbReference>
<dbReference type="GO" id="GO:0002143">
    <property type="term" value="P:tRNA wobble position uridine thiolation"/>
    <property type="evidence" value="ECO:0007669"/>
    <property type="project" value="TreeGrafter"/>
</dbReference>
<dbReference type="CDD" id="cd01998">
    <property type="entry name" value="MnmA_TRMU-like"/>
    <property type="match status" value="1"/>
</dbReference>
<dbReference type="FunFam" id="2.30.30.280:FF:000001">
    <property type="entry name" value="tRNA-specific 2-thiouridylase MnmA"/>
    <property type="match status" value="1"/>
</dbReference>
<dbReference type="FunFam" id="3.40.50.620:FF:000115">
    <property type="entry name" value="tRNA-specific 2-thiouridylase MnmA"/>
    <property type="match status" value="1"/>
</dbReference>
<dbReference type="Gene3D" id="2.30.30.280">
    <property type="entry name" value="Adenine nucleotide alpha hydrolases-like domains"/>
    <property type="match status" value="1"/>
</dbReference>
<dbReference type="Gene3D" id="3.40.50.620">
    <property type="entry name" value="HUPs"/>
    <property type="match status" value="1"/>
</dbReference>
<dbReference type="Gene3D" id="2.40.30.10">
    <property type="entry name" value="Translation factors"/>
    <property type="match status" value="1"/>
</dbReference>
<dbReference type="HAMAP" id="MF_00144">
    <property type="entry name" value="tRNA_thiouridyl_MnmA"/>
    <property type="match status" value="1"/>
</dbReference>
<dbReference type="InterPro" id="IPR004506">
    <property type="entry name" value="MnmA-like"/>
</dbReference>
<dbReference type="InterPro" id="IPR046885">
    <property type="entry name" value="MnmA-like_C"/>
</dbReference>
<dbReference type="InterPro" id="IPR046884">
    <property type="entry name" value="MnmA-like_central"/>
</dbReference>
<dbReference type="InterPro" id="IPR023382">
    <property type="entry name" value="MnmA-like_central_sf"/>
</dbReference>
<dbReference type="InterPro" id="IPR014729">
    <property type="entry name" value="Rossmann-like_a/b/a_fold"/>
</dbReference>
<dbReference type="NCBIfam" id="NF001138">
    <property type="entry name" value="PRK00143.1"/>
    <property type="match status" value="1"/>
</dbReference>
<dbReference type="NCBIfam" id="TIGR00420">
    <property type="entry name" value="trmU"/>
    <property type="match status" value="1"/>
</dbReference>
<dbReference type="PANTHER" id="PTHR11933:SF5">
    <property type="entry name" value="MITOCHONDRIAL TRNA-SPECIFIC 2-THIOURIDYLASE 1"/>
    <property type="match status" value="1"/>
</dbReference>
<dbReference type="PANTHER" id="PTHR11933">
    <property type="entry name" value="TRNA 5-METHYLAMINOMETHYL-2-THIOURIDYLATE -METHYLTRANSFERASE"/>
    <property type="match status" value="1"/>
</dbReference>
<dbReference type="Pfam" id="PF03054">
    <property type="entry name" value="tRNA_Me_trans"/>
    <property type="match status" value="1"/>
</dbReference>
<dbReference type="Pfam" id="PF20258">
    <property type="entry name" value="tRNA_Me_trans_C"/>
    <property type="match status" value="1"/>
</dbReference>
<dbReference type="Pfam" id="PF20259">
    <property type="entry name" value="tRNA_Me_trans_M"/>
    <property type="match status" value="1"/>
</dbReference>
<dbReference type="SUPFAM" id="SSF52402">
    <property type="entry name" value="Adenine nucleotide alpha hydrolases-like"/>
    <property type="match status" value="1"/>
</dbReference>
<proteinExistence type="inferred from homology"/>
<accession>Q3SV21</accession>
<feature type="chain" id="PRO_0000349716" description="tRNA-specific 2-thiouridylase MnmA">
    <location>
        <begin position="1"/>
        <end position="400"/>
    </location>
</feature>
<feature type="region of interest" description="Interaction with tRNA" evidence="1">
    <location>
        <begin position="160"/>
        <end position="162"/>
    </location>
</feature>
<feature type="active site" description="Nucleophile" evidence="1">
    <location>
        <position position="113"/>
    </location>
</feature>
<feature type="active site" description="Cysteine persulfide intermediate" evidence="1">
    <location>
        <position position="210"/>
    </location>
</feature>
<feature type="binding site" evidence="1">
    <location>
        <begin position="19"/>
        <end position="26"/>
    </location>
    <ligand>
        <name>ATP</name>
        <dbReference type="ChEBI" id="CHEBI:30616"/>
    </ligand>
</feature>
<feature type="binding site" evidence="1">
    <location>
        <position position="45"/>
    </location>
    <ligand>
        <name>ATP</name>
        <dbReference type="ChEBI" id="CHEBI:30616"/>
    </ligand>
</feature>
<feature type="binding site" evidence="1">
    <location>
        <position position="137"/>
    </location>
    <ligand>
        <name>ATP</name>
        <dbReference type="ChEBI" id="CHEBI:30616"/>
    </ligand>
</feature>
<feature type="site" description="Interaction with tRNA" evidence="1">
    <location>
        <position position="138"/>
    </location>
</feature>
<feature type="site" description="Interaction with tRNA" evidence="1">
    <location>
        <position position="352"/>
    </location>
</feature>
<feature type="disulfide bond" description="Alternate" evidence="1">
    <location>
        <begin position="113"/>
        <end position="210"/>
    </location>
</feature>
<keyword id="KW-0067">ATP-binding</keyword>
<keyword id="KW-0963">Cytoplasm</keyword>
<keyword id="KW-1015">Disulfide bond</keyword>
<keyword id="KW-0547">Nucleotide-binding</keyword>
<keyword id="KW-1185">Reference proteome</keyword>
<keyword id="KW-0694">RNA-binding</keyword>
<keyword id="KW-0808">Transferase</keyword>
<keyword id="KW-0819">tRNA processing</keyword>
<keyword id="KW-0820">tRNA-binding</keyword>
<name>MNMA_NITWN</name>